<feature type="chain" id="PRO_1000092434" description="Elongation factor 4">
    <location>
        <begin position="1"/>
        <end position="600"/>
    </location>
</feature>
<feature type="domain" description="tr-type G">
    <location>
        <begin position="5"/>
        <end position="187"/>
    </location>
</feature>
<feature type="binding site" evidence="1">
    <location>
        <begin position="17"/>
        <end position="22"/>
    </location>
    <ligand>
        <name>GTP</name>
        <dbReference type="ChEBI" id="CHEBI:37565"/>
    </ligand>
</feature>
<feature type="binding site" evidence="1">
    <location>
        <begin position="134"/>
        <end position="137"/>
    </location>
    <ligand>
        <name>GTP</name>
        <dbReference type="ChEBI" id="CHEBI:37565"/>
    </ligand>
</feature>
<name>LEPA_RHOCS</name>
<gene>
    <name evidence="1" type="primary">lepA</name>
    <name type="ordered locus">RC1_2403</name>
</gene>
<dbReference type="EC" id="3.6.5.n1" evidence="1"/>
<dbReference type="EMBL" id="CP000613">
    <property type="protein sequence ID" value="ACI99788.1"/>
    <property type="molecule type" value="Genomic_DNA"/>
</dbReference>
<dbReference type="RefSeq" id="WP_012567571.1">
    <property type="nucleotide sequence ID" value="NC_011420.2"/>
</dbReference>
<dbReference type="SMR" id="B6IUG3"/>
<dbReference type="STRING" id="414684.RC1_2403"/>
<dbReference type="KEGG" id="rce:RC1_2403"/>
<dbReference type="eggNOG" id="COG0481">
    <property type="taxonomic scope" value="Bacteria"/>
</dbReference>
<dbReference type="HOGENOM" id="CLU_009995_3_3_5"/>
<dbReference type="OrthoDB" id="9802948at2"/>
<dbReference type="Proteomes" id="UP000001591">
    <property type="component" value="Chromosome"/>
</dbReference>
<dbReference type="GO" id="GO:0005886">
    <property type="term" value="C:plasma membrane"/>
    <property type="evidence" value="ECO:0007669"/>
    <property type="project" value="UniProtKB-SubCell"/>
</dbReference>
<dbReference type="GO" id="GO:0005525">
    <property type="term" value="F:GTP binding"/>
    <property type="evidence" value="ECO:0007669"/>
    <property type="project" value="UniProtKB-UniRule"/>
</dbReference>
<dbReference type="GO" id="GO:0003924">
    <property type="term" value="F:GTPase activity"/>
    <property type="evidence" value="ECO:0007669"/>
    <property type="project" value="UniProtKB-UniRule"/>
</dbReference>
<dbReference type="GO" id="GO:0097216">
    <property type="term" value="F:guanosine tetraphosphate binding"/>
    <property type="evidence" value="ECO:0007669"/>
    <property type="project" value="UniProtKB-ARBA"/>
</dbReference>
<dbReference type="GO" id="GO:0043022">
    <property type="term" value="F:ribosome binding"/>
    <property type="evidence" value="ECO:0007669"/>
    <property type="project" value="UniProtKB-UniRule"/>
</dbReference>
<dbReference type="GO" id="GO:0003746">
    <property type="term" value="F:translation elongation factor activity"/>
    <property type="evidence" value="ECO:0007669"/>
    <property type="project" value="UniProtKB-UniRule"/>
</dbReference>
<dbReference type="GO" id="GO:0045727">
    <property type="term" value="P:positive regulation of translation"/>
    <property type="evidence" value="ECO:0007669"/>
    <property type="project" value="UniProtKB-UniRule"/>
</dbReference>
<dbReference type="CDD" id="cd16260">
    <property type="entry name" value="EF4_III"/>
    <property type="match status" value="1"/>
</dbReference>
<dbReference type="CDD" id="cd01890">
    <property type="entry name" value="LepA"/>
    <property type="match status" value="1"/>
</dbReference>
<dbReference type="CDD" id="cd03709">
    <property type="entry name" value="lepA_C"/>
    <property type="match status" value="1"/>
</dbReference>
<dbReference type="FunFam" id="3.40.50.300:FF:000078">
    <property type="entry name" value="Elongation factor 4"/>
    <property type="match status" value="1"/>
</dbReference>
<dbReference type="FunFam" id="2.40.30.10:FF:000015">
    <property type="entry name" value="Translation factor GUF1, mitochondrial"/>
    <property type="match status" value="1"/>
</dbReference>
<dbReference type="FunFam" id="3.30.70.240:FF:000007">
    <property type="entry name" value="Translation factor GUF1, mitochondrial"/>
    <property type="match status" value="1"/>
</dbReference>
<dbReference type="FunFam" id="3.30.70.2570:FF:000001">
    <property type="entry name" value="Translation factor GUF1, mitochondrial"/>
    <property type="match status" value="1"/>
</dbReference>
<dbReference type="FunFam" id="3.30.70.870:FF:000004">
    <property type="entry name" value="Translation factor GUF1, mitochondrial"/>
    <property type="match status" value="1"/>
</dbReference>
<dbReference type="Gene3D" id="3.30.70.240">
    <property type="match status" value="1"/>
</dbReference>
<dbReference type="Gene3D" id="3.30.70.2570">
    <property type="entry name" value="Elongation factor 4, C-terminal domain"/>
    <property type="match status" value="1"/>
</dbReference>
<dbReference type="Gene3D" id="3.30.70.870">
    <property type="entry name" value="Elongation Factor G (Translational Gtpase), domain 3"/>
    <property type="match status" value="1"/>
</dbReference>
<dbReference type="Gene3D" id="3.40.50.300">
    <property type="entry name" value="P-loop containing nucleotide triphosphate hydrolases"/>
    <property type="match status" value="1"/>
</dbReference>
<dbReference type="Gene3D" id="2.40.30.10">
    <property type="entry name" value="Translation factors"/>
    <property type="match status" value="1"/>
</dbReference>
<dbReference type="HAMAP" id="MF_00071">
    <property type="entry name" value="LepA"/>
    <property type="match status" value="1"/>
</dbReference>
<dbReference type="InterPro" id="IPR006297">
    <property type="entry name" value="EF-4"/>
</dbReference>
<dbReference type="InterPro" id="IPR035647">
    <property type="entry name" value="EFG_III/V"/>
</dbReference>
<dbReference type="InterPro" id="IPR000640">
    <property type="entry name" value="EFG_V-like"/>
</dbReference>
<dbReference type="InterPro" id="IPR004161">
    <property type="entry name" value="EFTu-like_2"/>
</dbReference>
<dbReference type="InterPro" id="IPR031157">
    <property type="entry name" value="G_TR_CS"/>
</dbReference>
<dbReference type="InterPro" id="IPR038363">
    <property type="entry name" value="LepA_C_sf"/>
</dbReference>
<dbReference type="InterPro" id="IPR013842">
    <property type="entry name" value="LepA_CTD"/>
</dbReference>
<dbReference type="InterPro" id="IPR035654">
    <property type="entry name" value="LepA_IV"/>
</dbReference>
<dbReference type="InterPro" id="IPR027417">
    <property type="entry name" value="P-loop_NTPase"/>
</dbReference>
<dbReference type="InterPro" id="IPR005225">
    <property type="entry name" value="Small_GTP-bd"/>
</dbReference>
<dbReference type="InterPro" id="IPR000795">
    <property type="entry name" value="T_Tr_GTP-bd_dom"/>
</dbReference>
<dbReference type="NCBIfam" id="TIGR01393">
    <property type="entry name" value="lepA"/>
    <property type="match status" value="1"/>
</dbReference>
<dbReference type="NCBIfam" id="TIGR00231">
    <property type="entry name" value="small_GTP"/>
    <property type="match status" value="1"/>
</dbReference>
<dbReference type="PANTHER" id="PTHR43512:SF4">
    <property type="entry name" value="TRANSLATION FACTOR GUF1 HOMOLOG, CHLOROPLASTIC"/>
    <property type="match status" value="1"/>
</dbReference>
<dbReference type="PANTHER" id="PTHR43512">
    <property type="entry name" value="TRANSLATION FACTOR GUF1-RELATED"/>
    <property type="match status" value="1"/>
</dbReference>
<dbReference type="Pfam" id="PF00679">
    <property type="entry name" value="EFG_C"/>
    <property type="match status" value="1"/>
</dbReference>
<dbReference type="Pfam" id="PF00009">
    <property type="entry name" value="GTP_EFTU"/>
    <property type="match status" value="1"/>
</dbReference>
<dbReference type="Pfam" id="PF03144">
    <property type="entry name" value="GTP_EFTU_D2"/>
    <property type="match status" value="1"/>
</dbReference>
<dbReference type="Pfam" id="PF06421">
    <property type="entry name" value="LepA_C"/>
    <property type="match status" value="1"/>
</dbReference>
<dbReference type="PRINTS" id="PR00315">
    <property type="entry name" value="ELONGATNFCT"/>
</dbReference>
<dbReference type="SUPFAM" id="SSF54980">
    <property type="entry name" value="EF-G C-terminal domain-like"/>
    <property type="match status" value="2"/>
</dbReference>
<dbReference type="SUPFAM" id="SSF52540">
    <property type="entry name" value="P-loop containing nucleoside triphosphate hydrolases"/>
    <property type="match status" value="1"/>
</dbReference>
<dbReference type="PROSITE" id="PS00301">
    <property type="entry name" value="G_TR_1"/>
    <property type="match status" value="1"/>
</dbReference>
<dbReference type="PROSITE" id="PS51722">
    <property type="entry name" value="G_TR_2"/>
    <property type="match status" value="1"/>
</dbReference>
<sequence length="600" mass="66791">MTDLSRIRNFSIIAHIDHGKSTLADRLIEFCGAIEAREMKAQLLDNMDIERERGITIKAQTVRLNYKAKDGEIYQLNLMDTPGHVDFAYEVSRSLAACEGSILVVDASQGVEAQTLANVYQAIDANHEIVPVLNKIDLPAADVPRVKQQIEDVIGLDASDAVEVSAKSGINIDGVLEAIVTRLPPPKGDAAAPLQALIVDSWYDAYLGVVVLVRVVNGELRTGQKVRFMATGATRELDRVGIFGPKKMLVDRLGPGEMGFVTAAIKDIRDTKVGDTITEEKRLAPTPLPGFKPSIPVVFCGLFPTDAADFEDLRESLGKLALNDASFQFEMESSAALGFGFRCGFLGLLHLEIIQERLEREFNLDLITTAPSVVYRMHMNDGTMKEMHNPADMPDPVKIDRIEEPWIKANIMLPDEYLGGVLQLCTERRGIQKDLTYVGGRAMLVYELPLNEVVFDFYDRLKSISRGYASFDYVLEGYREGDLVKMSILVNNEPVDALAMIVHRTQAEYRGRQLCERLKDLIPRHLFKIPIQAAIGGRVIARETIAALRKDVLAKCYGGDISRKRKLLDKQKEGKKRMRQFGEVEIPQSAFIAALRMGQE</sequence>
<reference key="1">
    <citation type="submission" date="2007-03" db="EMBL/GenBank/DDBJ databases">
        <title>Genome sequence of Rhodospirillum centenum.</title>
        <authorList>
            <person name="Touchman J.W."/>
            <person name="Bauer C."/>
            <person name="Blankenship R.E."/>
        </authorList>
    </citation>
    <scope>NUCLEOTIDE SEQUENCE [LARGE SCALE GENOMIC DNA]</scope>
    <source>
        <strain>ATCC 51521 / SW</strain>
    </source>
</reference>
<accession>B6IUG3</accession>
<comment type="function">
    <text evidence="1">Required for accurate and efficient protein synthesis under certain stress conditions. May act as a fidelity factor of the translation reaction, by catalyzing a one-codon backward translocation of tRNAs on improperly translocated ribosomes. Back-translocation proceeds from a post-translocation (POST) complex to a pre-translocation (PRE) complex, thus giving elongation factor G a second chance to translocate the tRNAs correctly. Binds to ribosomes in a GTP-dependent manner.</text>
</comment>
<comment type="catalytic activity">
    <reaction evidence="1">
        <text>GTP + H2O = GDP + phosphate + H(+)</text>
        <dbReference type="Rhea" id="RHEA:19669"/>
        <dbReference type="ChEBI" id="CHEBI:15377"/>
        <dbReference type="ChEBI" id="CHEBI:15378"/>
        <dbReference type="ChEBI" id="CHEBI:37565"/>
        <dbReference type="ChEBI" id="CHEBI:43474"/>
        <dbReference type="ChEBI" id="CHEBI:58189"/>
        <dbReference type="EC" id="3.6.5.n1"/>
    </reaction>
</comment>
<comment type="subcellular location">
    <subcellularLocation>
        <location evidence="1">Cell inner membrane</location>
        <topology evidence="1">Peripheral membrane protein</topology>
        <orientation evidence="1">Cytoplasmic side</orientation>
    </subcellularLocation>
</comment>
<comment type="similarity">
    <text evidence="1">Belongs to the TRAFAC class translation factor GTPase superfamily. Classic translation factor GTPase family. LepA subfamily.</text>
</comment>
<protein>
    <recommendedName>
        <fullName evidence="1">Elongation factor 4</fullName>
        <shortName evidence="1">EF-4</shortName>
        <ecNumber evidence="1">3.6.5.n1</ecNumber>
    </recommendedName>
    <alternativeName>
        <fullName evidence="1">Ribosomal back-translocase LepA</fullName>
    </alternativeName>
</protein>
<organism>
    <name type="scientific">Rhodospirillum centenum (strain ATCC 51521 / SW)</name>
    <dbReference type="NCBI Taxonomy" id="414684"/>
    <lineage>
        <taxon>Bacteria</taxon>
        <taxon>Pseudomonadati</taxon>
        <taxon>Pseudomonadota</taxon>
        <taxon>Alphaproteobacteria</taxon>
        <taxon>Rhodospirillales</taxon>
        <taxon>Rhodospirillaceae</taxon>
        <taxon>Rhodospirillum</taxon>
    </lineage>
</organism>
<proteinExistence type="inferred from homology"/>
<evidence type="ECO:0000255" key="1">
    <source>
        <dbReference type="HAMAP-Rule" id="MF_00071"/>
    </source>
</evidence>
<keyword id="KW-0997">Cell inner membrane</keyword>
<keyword id="KW-1003">Cell membrane</keyword>
<keyword id="KW-0342">GTP-binding</keyword>
<keyword id="KW-0378">Hydrolase</keyword>
<keyword id="KW-0472">Membrane</keyword>
<keyword id="KW-0547">Nucleotide-binding</keyword>
<keyword id="KW-0648">Protein biosynthesis</keyword>
<keyword id="KW-1185">Reference proteome</keyword>